<proteinExistence type="inferred from homology"/>
<dbReference type="EC" id="4.1.1.37" evidence="1"/>
<dbReference type="EMBL" id="CP000627">
    <property type="protein sequence ID" value="ABQ22064.1"/>
    <property type="status" value="ALT_INIT"/>
    <property type="molecule type" value="Genomic_DNA"/>
</dbReference>
<dbReference type="EMBL" id="CP001235">
    <property type="protein sequence ID" value="ACP08398.1"/>
    <property type="status" value="ALT_INIT"/>
    <property type="molecule type" value="Genomic_DNA"/>
</dbReference>
<dbReference type="RefSeq" id="WP_000137608.1">
    <property type="nucleotide sequence ID" value="NZ_JAACZH010000036.1"/>
</dbReference>
<dbReference type="SMR" id="A5F3N0"/>
<dbReference type="KEGG" id="vco:VC0395_A2734"/>
<dbReference type="KEGG" id="vcr:VC395_0375"/>
<dbReference type="PATRIC" id="fig|345073.21.peg.363"/>
<dbReference type="eggNOG" id="COG0407">
    <property type="taxonomic scope" value="Bacteria"/>
</dbReference>
<dbReference type="HOGENOM" id="CLU_040933_0_0_6"/>
<dbReference type="UniPathway" id="UPA00251">
    <property type="reaction ID" value="UER00321"/>
</dbReference>
<dbReference type="Proteomes" id="UP000000249">
    <property type="component" value="Chromosome 2"/>
</dbReference>
<dbReference type="GO" id="GO:0005829">
    <property type="term" value="C:cytosol"/>
    <property type="evidence" value="ECO:0007669"/>
    <property type="project" value="TreeGrafter"/>
</dbReference>
<dbReference type="GO" id="GO:0004853">
    <property type="term" value="F:uroporphyrinogen decarboxylase activity"/>
    <property type="evidence" value="ECO:0007669"/>
    <property type="project" value="UniProtKB-UniRule"/>
</dbReference>
<dbReference type="GO" id="GO:0019353">
    <property type="term" value="P:protoporphyrinogen IX biosynthetic process from glutamate"/>
    <property type="evidence" value="ECO:0007669"/>
    <property type="project" value="TreeGrafter"/>
</dbReference>
<dbReference type="CDD" id="cd00717">
    <property type="entry name" value="URO-D"/>
    <property type="match status" value="1"/>
</dbReference>
<dbReference type="FunFam" id="3.20.20.210:FF:000001">
    <property type="entry name" value="Uroporphyrinogen decarboxylase"/>
    <property type="match status" value="1"/>
</dbReference>
<dbReference type="Gene3D" id="3.20.20.210">
    <property type="match status" value="1"/>
</dbReference>
<dbReference type="HAMAP" id="MF_00218">
    <property type="entry name" value="URO_D"/>
    <property type="match status" value="1"/>
</dbReference>
<dbReference type="InterPro" id="IPR038071">
    <property type="entry name" value="UROD/MetE-like_sf"/>
</dbReference>
<dbReference type="InterPro" id="IPR006361">
    <property type="entry name" value="Uroporphyrinogen_deCO2ase_HemE"/>
</dbReference>
<dbReference type="InterPro" id="IPR000257">
    <property type="entry name" value="Uroporphyrinogen_deCOase"/>
</dbReference>
<dbReference type="NCBIfam" id="TIGR01464">
    <property type="entry name" value="hemE"/>
    <property type="match status" value="1"/>
</dbReference>
<dbReference type="PANTHER" id="PTHR21091">
    <property type="entry name" value="METHYLTETRAHYDROFOLATE:HOMOCYSTEINE METHYLTRANSFERASE RELATED"/>
    <property type="match status" value="1"/>
</dbReference>
<dbReference type="PANTHER" id="PTHR21091:SF169">
    <property type="entry name" value="UROPORPHYRINOGEN DECARBOXYLASE"/>
    <property type="match status" value="1"/>
</dbReference>
<dbReference type="Pfam" id="PF01208">
    <property type="entry name" value="URO-D"/>
    <property type="match status" value="1"/>
</dbReference>
<dbReference type="SUPFAM" id="SSF51726">
    <property type="entry name" value="UROD/MetE-like"/>
    <property type="match status" value="1"/>
</dbReference>
<dbReference type="PROSITE" id="PS00906">
    <property type="entry name" value="UROD_1"/>
    <property type="match status" value="1"/>
</dbReference>
<dbReference type="PROSITE" id="PS00907">
    <property type="entry name" value="UROD_2"/>
    <property type="match status" value="1"/>
</dbReference>
<organism>
    <name type="scientific">Vibrio cholerae serotype O1 (strain ATCC 39541 / Classical Ogawa 395 / O395)</name>
    <dbReference type="NCBI Taxonomy" id="345073"/>
    <lineage>
        <taxon>Bacteria</taxon>
        <taxon>Pseudomonadati</taxon>
        <taxon>Pseudomonadota</taxon>
        <taxon>Gammaproteobacteria</taxon>
        <taxon>Vibrionales</taxon>
        <taxon>Vibrionaceae</taxon>
        <taxon>Vibrio</taxon>
    </lineage>
</organism>
<keyword id="KW-0963">Cytoplasm</keyword>
<keyword id="KW-0210">Decarboxylase</keyword>
<keyword id="KW-0456">Lyase</keyword>
<keyword id="KW-0627">Porphyrin biosynthesis</keyword>
<sequence length="355" mass="39048">MTELKNDRYLRALLKQPVDYTPVWMMRQAGRYLPEYRATRAQAGDFMALCKNAELASEVTLQPLRRFPLDAAILFSDILTIPDAMGLGLRFAAGEGPVFERPITCKADVDKIGIPDPEGELQYVMNAVRQIRKDLQGEVPLIGFSGSPWTLATYMVEGGSSKAFTKIKKMMYSEPTVLHALLDKLADSVISYLNAQIKAGAQAVMVFDTWGGVLTPRDYQQFSLQYMHKIVDGLIRENEGRRVPVTLFTKNGGMWLEQIAATGCDAVGLDWTINIADAKARVGDKVALQGNMDPSILYAPAPRIREEVASILAGFGQGGTGHVFNLGHGIHLDVPPENAGVFVEAVHELSKPYHP</sequence>
<accession>A5F3N0</accession>
<accession>C3M3Z0</accession>
<protein>
    <recommendedName>
        <fullName evidence="1">Uroporphyrinogen decarboxylase</fullName>
        <shortName evidence="1">UPD</shortName>
        <shortName evidence="1">URO-D</shortName>
        <ecNumber evidence="1">4.1.1.37</ecNumber>
    </recommendedName>
</protein>
<reference key="1">
    <citation type="submission" date="2007-03" db="EMBL/GenBank/DDBJ databases">
        <authorList>
            <person name="Heidelberg J."/>
        </authorList>
    </citation>
    <scope>NUCLEOTIDE SEQUENCE [LARGE SCALE GENOMIC DNA]</scope>
    <source>
        <strain>ATCC 39541 / Classical Ogawa 395 / O395</strain>
    </source>
</reference>
<reference key="2">
    <citation type="journal article" date="2008" name="PLoS ONE">
        <title>A recalibrated molecular clock and independent origins for the cholera pandemic clones.</title>
        <authorList>
            <person name="Feng L."/>
            <person name="Reeves P.R."/>
            <person name="Lan R."/>
            <person name="Ren Y."/>
            <person name="Gao C."/>
            <person name="Zhou Z."/>
            <person name="Ren Y."/>
            <person name="Cheng J."/>
            <person name="Wang W."/>
            <person name="Wang J."/>
            <person name="Qian W."/>
            <person name="Li D."/>
            <person name="Wang L."/>
        </authorList>
    </citation>
    <scope>NUCLEOTIDE SEQUENCE [LARGE SCALE GENOMIC DNA]</scope>
    <source>
        <strain>ATCC 39541 / Classical Ogawa 395 / O395</strain>
    </source>
</reference>
<name>DCUP_VIBC3</name>
<feature type="chain" id="PRO_0000325708" description="Uroporphyrinogen decarboxylase">
    <location>
        <begin position="1"/>
        <end position="355"/>
    </location>
</feature>
<feature type="binding site" evidence="1">
    <location>
        <begin position="27"/>
        <end position="31"/>
    </location>
    <ligand>
        <name>substrate</name>
    </ligand>
</feature>
<feature type="binding site" evidence="1">
    <location>
        <position position="77"/>
    </location>
    <ligand>
        <name>substrate</name>
    </ligand>
</feature>
<feature type="binding site" evidence="1">
    <location>
        <position position="154"/>
    </location>
    <ligand>
        <name>substrate</name>
    </ligand>
</feature>
<feature type="binding site" evidence="1">
    <location>
        <position position="209"/>
    </location>
    <ligand>
        <name>substrate</name>
    </ligand>
</feature>
<feature type="binding site" evidence="1">
    <location>
        <position position="328"/>
    </location>
    <ligand>
        <name>substrate</name>
    </ligand>
</feature>
<feature type="site" description="Transition state stabilizer" evidence="1">
    <location>
        <position position="77"/>
    </location>
</feature>
<evidence type="ECO:0000255" key="1">
    <source>
        <dbReference type="HAMAP-Rule" id="MF_00218"/>
    </source>
</evidence>
<evidence type="ECO:0000305" key="2"/>
<comment type="function">
    <text evidence="1">Catalyzes the decarboxylation of four acetate groups of uroporphyrinogen-III to yield coproporphyrinogen-III.</text>
</comment>
<comment type="catalytic activity">
    <reaction evidence="1">
        <text>uroporphyrinogen III + 4 H(+) = coproporphyrinogen III + 4 CO2</text>
        <dbReference type="Rhea" id="RHEA:19865"/>
        <dbReference type="ChEBI" id="CHEBI:15378"/>
        <dbReference type="ChEBI" id="CHEBI:16526"/>
        <dbReference type="ChEBI" id="CHEBI:57308"/>
        <dbReference type="ChEBI" id="CHEBI:57309"/>
        <dbReference type="EC" id="4.1.1.37"/>
    </reaction>
</comment>
<comment type="pathway">
    <text evidence="1">Porphyrin-containing compound metabolism; protoporphyrin-IX biosynthesis; coproporphyrinogen-III from 5-aminolevulinate: step 4/4.</text>
</comment>
<comment type="subunit">
    <text evidence="1">Homodimer.</text>
</comment>
<comment type="subcellular location">
    <subcellularLocation>
        <location evidence="1">Cytoplasm</location>
    </subcellularLocation>
</comment>
<comment type="similarity">
    <text evidence="1">Belongs to the uroporphyrinogen decarboxylase family.</text>
</comment>
<comment type="sequence caution" evidence="2">
    <conflict type="erroneous initiation">
        <sequence resource="EMBL-CDS" id="ABQ22064"/>
    </conflict>
</comment>
<comment type="sequence caution" evidence="2">
    <conflict type="erroneous initiation">
        <sequence resource="EMBL-CDS" id="ACP08398"/>
    </conflict>
</comment>
<gene>
    <name evidence="1" type="primary">hemE</name>
    <name type="ordered locus">VC0395_A2734</name>
    <name type="ordered locus">VC395_0375</name>
</gene>